<comment type="function">
    <text evidence="1">May catalyze the synthesis of indole-3-acetic acid (IAA)-amino acid conjugates, providing a mechanism for the plant to cope with the presence of excess auxin.</text>
</comment>
<comment type="tissue specificity">
    <text evidence="2">Expressed in roots.</text>
</comment>
<comment type="induction">
    <text evidence="2">At very low level by auxin.</text>
</comment>
<comment type="similarity">
    <text evidence="3">Belongs to the IAA-amido conjugating enzyme family.</text>
</comment>
<reference key="1">
    <citation type="journal article" date="2005" name="BMC Biol.">
        <title>The sequence of rice chromosomes 11 and 12, rich in disease resistance genes and recent gene duplications.</title>
        <authorList>
            <consortium name="The rice chromosomes 11 and 12 sequencing consortia"/>
        </authorList>
    </citation>
    <scope>NUCLEOTIDE SEQUENCE [LARGE SCALE GENOMIC DNA]</scope>
    <source>
        <strain>cv. Nipponbare</strain>
    </source>
</reference>
<reference key="2">
    <citation type="journal article" date="2005" name="Nature">
        <title>The map-based sequence of the rice genome.</title>
        <authorList>
            <consortium name="International rice genome sequencing project (IRGSP)"/>
        </authorList>
    </citation>
    <scope>NUCLEOTIDE SEQUENCE [LARGE SCALE GENOMIC DNA]</scope>
    <source>
        <strain>cv. Nipponbare</strain>
    </source>
</reference>
<reference key="3">
    <citation type="journal article" date="2008" name="Nucleic Acids Res.">
        <title>The rice annotation project database (RAP-DB): 2008 update.</title>
        <authorList>
            <consortium name="The rice annotation project (RAP)"/>
        </authorList>
    </citation>
    <scope>GENOME REANNOTATION</scope>
    <source>
        <strain>cv. Nipponbare</strain>
    </source>
</reference>
<reference key="4">
    <citation type="journal article" date="2013" name="Rice">
        <title>Improvement of the Oryza sativa Nipponbare reference genome using next generation sequence and optical map data.</title>
        <authorList>
            <person name="Kawahara Y."/>
            <person name="de la Bastide M."/>
            <person name="Hamilton J.P."/>
            <person name="Kanamori H."/>
            <person name="McCombie W.R."/>
            <person name="Ouyang S."/>
            <person name="Schwartz D.C."/>
            <person name="Tanaka T."/>
            <person name="Wu J."/>
            <person name="Zhou S."/>
            <person name="Childs K.L."/>
            <person name="Davidson R.M."/>
            <person name="Lin H."/>
            <person name="Quesada-Ocampo L."/>
            <person name="Vaillancourt B."/>
            <person name="Sakai H."/>
            <person name="Lee S.S."/>
            <person name="Kim J."/>
            <person name="Numa H."/>
            <person name="Itoh T."/>
            <person name="Buell C.R."/>
            <person name="Matsumoto T."/>
        </authorList>
    </citation>
    <scope>GENOME REANNOTATION</scope>
    <source>
        <strain>cv. Nipponbare</strain>
    </source>
</reference>
<reference key="5">
    <citation type="journal article" date="2006" name="Funct. Integr. Genomics">
        <title>The auxin-responsive GH3 gene family in rice (Oryza sativa).</title>
        <authorList>
            <person name="Jain M."/>
            <person name="Kaur N."/>
            <person name="Tyagi A.K."/>
            <person name="Khurana J.P."/>
        </authorList>
    </citation>
    <scope>TISSUE SPECIFICITY</scope>
    <scope>INDUCTION</scope>
    <scope>NOMENCLATURE</scope>
</reference>
<protein>
    <recommendedName>
        <fullName>Probable indole-3-acetic acid-amido synthetase GH3.12</fullName>
        <ecNumber>6.3.2.-</ecNumber>
    </recommendedName>
    <alternativeName>
        <fullName>Auxin-responsive GH3-like protein 12</fullName>
        <shortName>OsGH3-12</shortName>
    </alternativeName>
    <alternativeName>
        <fullName evidence="3">OsJAR3</fullName>
    </alternativeName>
</protein>
<evidence type="ECO:0000250" key="1">
    <source>
        <dbReference type="UniProtKB" id="O82333"/>
    </source>
</evidence>
<evidence type="ECO:0000269" key="2">
    <source>
    </source>
</evidence>
<evidence type="ECO:0000305" key="3"/>
<evidence type="ECO:0000312" key="4">
    <source>
        <dbReference type="EMBL" id="ABA91816.1"/>
    </source>
</evidence>
<organism>
    <name type="scientific">Oryza sativa subsp. japonica</name>
    <name type="common">Rice</name>
    <dbReference type="NCBI Taxonomy" id="39947"/>
    <lineage>
        <taxon>Eukaryota</taxon>
        <taxon>Viridiplantae</taxon>
        <taxon>Streptophyta</taxon>
        <taxon>Embryophyta</taxon>
        <taxon>Tracheophyta</taxon>
        <taxon>Spermatophyta</taxon>
        <taxon>Magnoliopsida</taxon>
        <taxon>Liliopsida</taxon>
        <taxon>Poales</taxon>
        <taxon>Poaceae</taxon>
        <taxon>BOP clade</taxon>
        <taxon>Oryzoideae</taxon>
        <taxon>Oryzeae</taxon>
        <taxon>Oryzinae</taxon>
        <taxon>Oryza</taxon>
        <taxon>Oryza sativa</taxon>
    </lineage>
</organism>
<feature type="chain" id="PRO_0000203589" description="Probable indole-3-acetic acid-amido synthetase GH3.12">
    <location>
        <begin position="1"/>
        <end position="613"/>
    </location>
</feature>
<accession>Q53P49</accession>
<accession>A0A0P0XZN2</accession>
<accession>Q2R9L4</accession>
<name>GH312_ORYSJ</name>
<keyword id="KW-0436">Ligase</keyword>
<keyword id="KW-1185">Reference proteome</keyword>
<gene>
    <name type="primary">GH3.12</name>
    <name evidence="3" type="ordered locus">Os11g0186500</name>
    <name evidence="4" type="ordered locus">LOC_Os11g08340</name>
</gene>
<dbReference type="EC" id="6.3.2.-"/>
<dbReference type="EMBL" id="AC128644">
    <property type="protein sequence ID" value="AAX96342.1"/>
    <property type="molecule type" value="Genomic_DNA"/>
</dbReference>
<dbReference type="EMBL" id="DP000010">
    <property type="protein sequence ID" value="ABA91816.1"/>
    <property type="molecule type" value="Genomic_DNA"/>
</dbReference>
<dbReference type="EMBL" id="AP008217">
    <property type="status" value="NOT_ANNOTATED_CDS"/>
    <property type="molecule type" value="Genomic_DNA"/>
</dbReference>
<dbReference type="EMBL" id="AP014967">
    <property type="protein sequence ID" value="BAT12987.1"/>
    <property type="molecule type" value="Genomic_DNA"/>
</dbReference>
<dbReference type="RefSeq" id="XP_015618008.1">
    <property type="nucleotide sequence ID" value="XM_015762522.1"/>
</dbReference>
<dbReference type="SMR" id="Q53P49"/>
<dbReference type="FunCoup" id="Q53P49">
    <property type="interactions" value="134"/>
</dbReference>
<dbReference type="STRING" id="39947.Q53P49"/>
<dbReference type="PaxDb" id="39947-Q53P49"/>
<dbReference type="EnsemblPlants" id="Os11t0186500-00">
    <property type="protein sequence ID" value="Os11t0186500-00"/>
    <property type="gene ID" value="Os11g0186500"/>
</dbReference>
<dbReference type="Gramene" id="Os11t0186500-00">
    <property type="protein sequence ID" value="Os11t0186500-00"/>
    <property type="gene ID" value="Os11g0186500"/>
</dbReference>
<dbReference type="KEGG" id="osa:107275638"/>
<dbReference type="eggNOG" id="ENOG502QPMW">
    <property type="taxonomic scope" value="Eukaryota"/>
</dbReference>
<dbReference type="HOGENOM" id="CLU_016249_2_1_1"/>
<dbReference type="InParanoid" id="Q53P49"/>
<dbReference type="OMA" id="TDGRQKY"/>
<dbReference type="OrthoDB" id="10004661at2759"/>
<dbReference type="PlantReactome" id="R-OSA-6787011">
    <property type="pathway name" value="Jasmonic acid signaling"/>
</dbReference>
<dbReference type="Proteomes" id="UP000000763">
    <property type="component" value="Chromosome 11"/>
</dbReference>
<dbReference type="Proteomes" id="UP000059680">
    <property type="component" value="Chromosome 11"/>
</dbReference>
<dbReference type="GO" id="GO:0005737">
    <property type="term" value="C:cytoplasm"/>
    <property type="evidence" value="ECO:0000318"/>
    <property type="project" value="GO_Central"/>
</dbReference>
<dbReference type="GO" id="GO:0016881">
    <property type="term" value="F:acid-amino acid ligase activity"/>
    <property type="evidence" value="ECO:0000318"/>
    <property type="project" value="GO_Central"/>
</dbReference>
<dbReference type="GO" id="GO:0009733">
    <property type="term" value="P:response to auxin"/>
    <property type="evidence" value="ECO:0000305"/>
    <property type="project" value="Gramene"/>
</dbReference>
<dbReference type="GO" id="GO:0009416">
    <property type="term" value="P:response to light stimulus"/>
    <property type="evidence" value="ECO:0000305"/>
    <property type="project" value="Gramene"/>
</dbReference>
<dbReference type="InterPro" id="IPR004993">
    <property type="entry name" value="GH3"/>
</dbReference>
<dbReference type="InterPro" id="IPR055378">
    <property type="entry name" value="GH3_C"/>
</dbReference>
<dbReference type="InterPro" id="IPR055377">
    <property type="entry name" value="GH3_M"/>
</dbReference>
<dbReference type="PANTHER" id="PTHR31901">
    <property type="entry name" value="GH3 DOMAIN-CONTAINING PROTEIN"/>
    <property type="match status" value="1"/>
</dbReference>
<dbReference type="PANTHER" id="PTHR31901:SF56">
    <property type="entry name" value="JASMONOYL--L-AMINO ACID SYNTHETASE GH3.3"/>
    <property type="match status" value="1"/>
</dbReference>
<dbReference type="Pfam" id="PF03321">
    <property type="entry name" value="GH3"/>
    <property type="match status" value="1"/>
</dbReference>
<dbReference type="Pfam" id="PF23572">
    <property type="entry name" value="GH3_C"/>
    <property type="match status" value="1"/>
</dbReference>
<dbReference type="Pfam" id="PF23571">
    <property type="entry name" value="GH3_M"/>
    <property type="match status" value="1"/>
</dbReference>
<proteinExistence type="evidence at transcript level"/>
<sequence length="613" mass="66659">MLEKEGKLIMSREDEEIMAWFERTTRDAADVQRETLRRILAENAGVEYLRELGLAGLTDAGSFRARVPVVTHADLDPYIQRVADGDASPVLTAKPVTAISLSSGTTQGKRKRLLFNDDLLRSSIRFFHASYAFTNRAFPVEDGRVLQFMYGSRHETTKGGLTATTVMTNLLRSEEFTASMAARSRPRLPSCSPSEVVFSPDFDESLYCHLLCGLLLAGEVRAVSASFAHSIVVALQALERVWRELCADIRRGAASPARVTTPAVRRAVAPILAAPNPALADALERRCAALGDWSGVIPALWPNARYVQATMTGSMEHYVKKLRHYAGGVPLVSGNYASSEGVIGINAEQHAPPESVVFTVLPDAAYFEFIPLKPPCTDAAADDDNPAAAGSSCYVDADDANPVGLTDVVVGEHYEVVMTTFTGLYRYRLGDVVKVAGFHHATPKLRFVCRRSLILSINVDKNSEHDLQLAVDSAAKILAGDGENHKQLEIADYTSHADTSSDPGHYVVFWELNGGGEEDGGGVLQRCCDEMDRAFGADAGYAQSRKTCAIGALELRVLRRGAFQEVLRHYVAGGSSAGQFKMPRCVAPSNAGVLRVLKDNTINIFFSTAYDYD</sequence>